<sequence>MKLQLVAVGTKMPDWVQTGFTEYLRRFPKDMPFELIEIPAGKRGKNADIKRILDKEGEQMLAAAGKNRIVTLDIPGKPWDTPQLAAELERWKLDGRDVSLLIGGPEGLSPACKAAAEQSWSLSALTLPHPLVRVLVAESLYRAWSITTNHPYHRE</sequence>
<reference key="1">
    <citation type="journal article" date="2008" name="DNA Res.">
        <title>Complete genome sequence and comparative analysis of the wild-type commensal Escherichia coli strain SE11 isolated from a healthy adult.</title>
        <authorList>
            <person name="Oshima K."/>
            <person name="Toh H."/>
            <person name="Ogura Y."/>
            <person name="Sasamoto H."/>
            <person name="Morita H."/>
            <person name="Park S.-H."/>
            <person name="Ooka T."/>
            <person name="Iyoda S."/>
            <person name="Taylor T.D."/>
            <person name="Hayashi T."/>
            <person name="Itoh K."/>
            <person name="Hattori M."/>
        </authorList>
    </citation>
    <scope>NUCLEOTIDE SEQUENCE [LARGE SCALE GENOMIC DNA]</scope>
    <source>
        <strain>SE11</strain>
    </source>
</reference>
<organism>
    <name type="scientific">Escherichia coli (strain SE11)</name>
    <dbReference type="NCBI Taxonomy" id="409438"/>
    <lineage>
        <taxon>Bacteria</taxon>
        <taxon>Pseudomonadati</taxon>
        <taxon>Pseudomonadota</taxon>
        <taxon>Gammaproteobacteria</taxon>
        <taxon>Enterobacterales</taxon>
        <taxon>Enterobacteriaceae</taxon>
        <taxon>Escherichia</taxon>
    </lineage>
</organism>
<evidence type="ECO:0000255" key="1">
    <source>
        <dbReference type="HAMAP-Rule" id="MF_00658"/>
    </source>
</evidence>
<gene>
    <name evidence="1" type="primary">rlmH</name>
    <name type="ordered locus">ECSE_0704</name>
</gene>
<protein>
    <recommendedName>
        <fullName evidence="1">Ribosomal RNA large subunit methyltransferase H</fullName>
        <ecNumber evidence="1">2.1.1.177</ecNumber>
    </recommendedName>
    <alternativeName>
        <fullName evidence="1">23S rRNA (pseudouridine1915-N3)-methyltransferase</fullName>
    </alternativeName>
    <alternativeName>
        <fullName evidence="1">23S rRNA m3Psi1915 methyltransferase</fullName>
    </alternativeName>
    <alternativeName>
        <fullName evidence="1">rRNA (pseudouridine-N3-)-methyltransferase RlmH</fullName>
    </alternativeName>
</protein>
<comment type="function">
    <text evidence="1">Specifically methylates the pseudouridine at position 1915 (m3Psi1915) in 23S rRNA.</text>
</comment>
<comment type="catalytic activity">
    <reaction evidence="1">
        <text>pseudouridine(1915) in 23S rRNA + S-adenosyl-L-methionine = N(3)-methylpseudouridine(1915) in 23S rRNA + S-adenosyl-L-homocysteine + H(+)</text>
        <dbReference type="Rhea" id="RHEA:42752"/>
        <dbReference type="Rhea" id="RHEA-COMP:10221"/>
        <dbReference type="Rhea" id="RHEA-COMP:10222"/>
        <dbReference type="ChEBI" id="CHEBI:15378"/>
        <dbReference type="ChEBI" id="CHEBI:57856"/>
        <dbReference type="ChEBI" id="CHEBI:59789"/>
        <dbReference type="ChEBI" id="CHEBI:65314"/>
        <dbReference type="ChEBI" id="CHEBI:74486"/>
        <dbReference type="EC" id="2.1.1.177"/>
    </reaction>
</comment>
<comment type="subunit">
    <text evidence="1">Homodimer.</text>
</comment>
<comment type="subcellular location">
    <subcellularLocation>
        <location evidence="1">Cytoplasm</location>
    </subcellularLocation>
</comment>
<comment type="similarity">
    <text evidence="1">Belongs to the RNA methyltransferase RlmH family.</text>
</comment>
<feature type="chain" id="PRO_0000366593" description="Ribosomal RNA large subunit methyltransferase H">
    <location>
        <begin position="1"/>
        <end position="155"/>
    </location>
</feature>
<feature type="binding site" evidence="1">
    <location>
        <position position="72"/>
    </location>
    <ligand>
        <name>S-adenosyl-L-methionine</name>
        <dbReference type="ChEBI" id="CHEBI:59789"/>
    </ligand>
</feature>
<feature type="binding site" evidence="1">
    <location>
        <position position="103"/>
    </location>
    <ligand>
        <name>S-adenosyl-L-methionine</name>
        <dbReference type="ChEBI" id="CHEBI:59789"/>
    </ligand>
</feature>
<feature type="binding site" evidence="1">
    <location>
        <begin position="122"/>
        <end position="127"/>
    </location>
    <ligand>
        <name>S-adenosyl-L-methionine</name>
        <dbReference type="ChEBI" id="CHEBI:59789"/>
    </ligand>
</feature>
<dbReference type="EC" id="2.1.1.177" evidence="1"/>
<dbReference type="EMBL" id="AP009240">
    <property type="protein sequence ID" value="BAG76228.1"/>
    <property type="molecule type" value="Genomic_DNA"/>
</dbReference>
<dbReference type="RefSeq" id="WP_000776104.1">
    <property type="nucleotide sequence ID" value="NC_011415.1"/>
</dbReference>
<dbReference type="SMR" id="B6I146"/>
<dbReference type="GeneID" id="93776846"/>
<dbReference type="KEGG" id="ecy:ECSE_0704"/>
<dbReference type="HOGENOM" id="CLU_100552_1_0_6"/>
<dbReference type="Proteomes" id="UP000008199">
    <property type="component" value="Chromosome"/>
</dbReference>
<dbReference type="GO" id="GO:0005737">
    <property type="term" value="C:cytoplasm"/>
    <property type="evidence" value="ECO:0007669"/>
    <property type="project" value="UniProtKB-SubCell"/>
</dbReference>
<dbReference type="GO" id="GO:0070038">
    <property type="term" value="F:rRNA (pseudouridine-N3-)-methyltransferase activity"/>
    <property type="evidence" value="ECO:0007669"/>
    <property type="project" value="UniProtKB-UniRule"/>
</dbReference>
<dbReference type="CDD" id="cd18081">
    <property type="entry name" value="RlmH-like"/>
    <property type="match status" value="1"/>
</dbReference>
<dbReference type="FunFam" id="3.40.1280.10:FF:000004">
    <property type="entry name" value="Ribosomal RNA large subunit methyltransferase H"/>
    <property type="match status" value="1"/>
</dbReference>
<dbReference type="Gene3D" id="3.40.1280.10">
    <property type="match status" value="1"/>
</dbReference>
<dbReference type="HAMAP" id="MF_00658">
    <property type="entry name" value="23SrRNA_methyltr_H"/>
    <property type="match status" value="1"/>
</dbReference>
<dbReference type="InterPro" id="IPR029028">
    <property type="entry name" value="Alpha/beta_knot_MTases"/>
</dbReference>
<dbReference type="InterPro" id="IPR003742">
    <property type="entry name" value="RlmH-like"/>
</dbReference>
<dbReference type="InterPro" id="IPR029026">
    <property type="entry name" value="tRNA_m1G_MTases_N"/>
</dbReference>
<dbReference type="NCBIfam" id="NF000984">
    <property type="entry name" value="PRK00103.1-1"/>
    <property type="match status" value="1"/>
</dbReference>
<dbReference type="NCBIfam" id="NF000986">
    <property type="entry name" value="PRK00103.1-4"/>
    <property type="match status" value="1"/>
</dbReference>
<dbReference type="NCBIfam" id="TIGR00246">
    <property type="entry name" value="tRNA_RlmH_YbeA"/>
    <property type="match status" value="1"/>
</dbReference>
<dbReference type="PANTHER" id="PTHR33603">
    <property type="entry name" value="METHYLTRANSFERASE"/>
    <property type="match status" value="1"/>
</dbReference>
<dbReference type="PANTHER" id="PTHR33603:SF1">
    <property type="entry name" value="RIBOSOMAL RNA LARGE SUBUNIT METHYLTRANSFERASE H"/>
    <property type="match status" value="1"/>
</dbReference>
<dbReference type="Pfam" id="PF02590">
    <property type="entry name" value="SPOUT_MTase"/>
    <property type="match status" value="1"/>
</dbReference>
<dbReference type="PIRSF" id="PIRSF004505">
    <property type="entry name" value="MT_bac"/>
    <property type="match status" value="1"/>
</dbReference>
<dbReference type="SUPFAM" id="SSF75217">
    <property type="entry name" value="alpha/beta knot"/>
    <property type="match status" value="1"/>
</dbReference>
<accession>B6I146</accession>
<name>RLMH_ECOSE</name>
<proteinExistence type="inferred from homology"/>
<keyword id="KW-0963">Cytoplasm</keyword>
<keyword id="KW-0489">Methyltransferase</keyword>
<keyword id="KW-0698">rRNA processing</keyword>
<keyword id="KW-0949">S-adenosyl-L-methionine</keyword>
<keyword id="KW-0808">Transferase</keyword>